<organism>
    <name type="scientific">Escherichia fergusonii (strain ATCC 35469 / DSM 13698 / CCUG 18766 / IAM 14443 / JCM 21226 / LMG 7866 / NBRC 102419 / NCTC 12128 / CDC 0568-73)</name>
    <dbReference type="NCBI Taxonomy" id="585054"/>
    <lineage>
        <taxon>Bacteria</taxon>
        <taxon>Pseudomonadati</taxon>
        <taxon>Pseudomonadota</taxon>
        <taxon>Gammaproteobacteria</taxon>
        <taxon>Enterobacterales</taxon>
        <taxon>Enterobacteriaceae</taxon>
        <taxon>Escherichia</taxon>
    </lineage>
</organism>
<gene>
    <name evidence="1" type="primary">asnA</name>
    <name type="ordered locus">EFER_4043</name>
</gene>
<accession>B7LK89</accession>
<protein>
    <recommendedName>
        <fullName evidence="1">Aspartate--ammonia ligase</fullName>
        <ecNumber evidence="1">6.3.1.1</ecNumber>
    </recommendedName>
    <alternativeName>
        <fullName evidence="1">Asparagine synthetase A</fullName>
    </alternativeName>
</protein>
<feature type="chain" id="PRO_1000129119" description="Aspartate--ammonia ligase">
    <location>
        <begin position="1"/>
        <end position="330"/>
    </location>
</feature>
<reference key="1">
    <citation type="journal article" date="2009" name="PLoS Genet.">
        <title>Organised genome dynamics in the Escherichia coli species results in highly diverse adaptive paths.</title>
        <authorList>
            <person name="Touchon M."/>
            <person name="Hoede C."/>
            <person name="Tenaillon O."/>
            <person name="Barbe V."/>
            <person name="Baeriswyl S."/>
            <person name="Bidet P."/>
            <person name="Bingen E."/>
            <person name="Bonacorsi S."/>
            <person name="Bouchier C."/>
            <person name="Bouvet O."/>
            <person name="Calteau A."/>
            <person name="Chiapello H."/>
            <person name="Clermont O."/>
            <person name="Cruveiller S."/>
            <person name="Danchin A."/>
            <person name="Diard M."/>
            <person name="Dossat C."/>
            <person name="Karoui M.E."/>
            <person name="Frapy E."/>
            <person name="Garry L."/>
            <person name="Ghigo J.M."/>
            <person name="Gilles A.M."/>
            <person name="Johnson J."/>
            <person name="Le Bouguenec C."/>
            <person name="Lescat M."/>
            <person name="Mangenot S."/>
            <person name="Martinez-Jehanne V."/>
            <person name="Matic I."/>
            <person name="Nassif X."/>
            <person name="Oztas S."/>
            <person name="Petit M.A."/>
            <person name="Pichon C."/>
            <person name="Rouy Z."/>
            <person name="Ruf C.S."/>
            <person name="Schneider D."/>
            <person name="Tourret J."/>
            <person name="Vacherie B."/>
            <person name="Vallenet D."/>
            <person name="Medigue C."/>
            <person name="Rocha E.P.C."/>
            <person name="Denamur E."/>
        </authorList>
    </citation>
    <scope>NUCLEOTIDE SEQUENCE [LARGE SCALE GENOMIC DNA]</scope>
    <source>
        <strain>ATCC 35469 / DSM 13698 / BCRC 15582 / CCUG 18766 / IAM 14443 / JCM 21226 / LMG 7866 / NBRC 102419 / NCTC 12128 / CDC 0568-73</strain>
    </source>
</reference>
<name>ASNA_ESCF3</name>
<sequence>MKTAYIAKQRQISFVKSHFSRQLEERLGLIEVQAPILSRVGDGTQDNLSGCEKAVQVKVKALPDAQFEVVHSLAKWKRQTLGQHDFSAGEGLYTHMKALRPDEDRLSPLHSVYVDQWDWERVMGDGERQFSTLKSTVEAIWAGIKATEAAVSEEFGLAPFLPDQIHFVHSQELLSRYPDLDAKGRERAIAKDLGAVFLVGIGGKLSDGHRHDVRAPDYDDWSTPSELGHAGLNGDILVWNPVLEDAFELSSMGIRVDAETLKHQLALTGDEDRLQLDWHQALLRGEMPQTIGGGIGQSRLTMLLLQLPHIGQVQCGVWPAAVRESVPSLL</sequence>
<comment type="catalytic activity">
    <reaction evidence="1">
        <text>L-aspartate + NH4(+) + ATP = L-asparagine + AMP + diphosphate + H(+)</text>
        <dbReference type="Rhea" id="RHEA:11372"/>
        <dbReference type="ChEBI" id="CHEBI:15378"/>
        <dbReference type="ChEBI" id="CHEBI:28938"/>
        <dbReference type="ChEBI" id="CHEBI:29991"/>
        <dbReference type="ChEBI" id="CHEBI:30616"/>
        <dbReference type="ChEBI" id="CHEBI:33019"/>
        <dbReference type="ChEBI" id="CHEBI:58048"/>
        <dbReference type="ChEBI" id="CHEBI:456215"/>
        <dbReference type="EC" id="6.3.1.1"/>
    </reaction>
</comment>
<comment type="pathway">
    <text evidence="1">Amino-acid biosynthesis; L-asparagine biosynthesis; L-asparagine from L-aspartate (ammonia route): step 1/1.</text>
</comment>
<comment type="subcellular location">
    <subcellularLocation>
        <location evidence="1">Cytoplasm</location>
    </subcellularLocation>
</comment>
<comment type="similarity">
    <text evidence="1">Belongs to the class-II aminoacyl-tRNA synthetase family. AsnA subfamily.</text>
</comment>
<proteinExistence type="inferred from homology"/>
<dbReference type="EC" id="6.3.1.1" evidence="1"/>
<dbReference type="EMBL" id="CU928158">
    <property type="protein sequence ID" value="CAQ91477.1"/>
    <property type="molecule type" value="Genomic_DNA"/>
</dbReference>
<dbReference type="RefSeq" id="WP_000845109.1">
    <property type="nucleotide sequence ID" value="NC_011740.1"/>
</dbReference>
<dbReference type="SMR" id="B7LK89"/>
<dbReference type="GeneID" id="75059637"/>
<dbReference type="KEGG" id="efe:EFER_4043"/>
<dbReference type="HOGENOM" id="CLU_071543_0_0_6"/>
<dbReference type="OrthoDB" id="3185462at2"/>
<dbReference type="UniPathway" id="UPA00134">
    <property type="reaction ID" value="UER00194"/>
</dbReference>
<dbReference type="Proteomes" id="UP000000745">
    <property type="component" value="Chromosome"/>
</dbReference>
<dbReference type="GO" id="GO:0005829">
    <property type="term" value="C:cytosol"/>
    <property type="evidence" value="ECO:0007669"/>
    <property type="project" value="TreeGrafter"/>
</dbReference>
<dbReference type="GO" id="GO:0004071">
    <property type="term" value="F:aspartate-ammonia ligase activity"/>
    <property type="evidence" value="ECO:0007669"/>
    <property type="project" value="UniProtKB-UniRule"/>
</dbReference>
<dbReference type="GO" id="GO:0005524">
    <property type="term" value="F:ATP binding"/>
    <property type="evidence" value="ECO:0007669"/>
    <property type="project" value="UniProtKB-UniRule"/>
</dbReference>
<dbReference type="GO" id="GO:0070981">
    <property type="term" value="P:L-asparagine biosynthetic process"/>
    <property type="evidence" value="ECO:0007669"/>
    <property type="project" value="UniProtKB-UniRule"/>
</dbReference>
<dbReference type="CDD" id="cd00645">
    <property type="entry name" value="AsnA"/>
    <property type="match status" value="1"/>
</dbReference>
<dbReference type="FunFam" id="3.30.930.10:FF:000025">
    <property type="entry name" value="Aspartate--ammonia ligase"/>
    <property type="match status" value="1"/>
</dbReference>
<dbReference type="Gene3D" id="3.30.930.10">
    <property type="entry name" value="Bira Bifunctional Protein, Domain 2"/>
    <property type="match status" value="1"/>
</dbReference>
<dbReference type="HAMAP" id="MF_00555">
    <property type="entry name" value="AsnA"/>
    <property type="match status" value="1"/>
</dbReference>
<dbReference type="InterPro" id="IPR006195">
    <property type="entry name" value="aa-tRNA-synth_II"/>
</dbReference>
<dbReference type="InterPro" id="IPR045864">
    <property type="entry name" value="aa-tRNA-synth_II/BPL/LPL"/>
</dbReference>
<dbReference type="InterPro" id="IPR004618">
    <property type="entry name" value="AsnA"/>
</dbReference>
<dbReference type="NCBIfam" id="TIGR00669">
    <property type="entry name" value="asnA"/>
    <property type="match status" value="1"/>
</dbReference>
<dbReference type="PANTHER" id="PTHR30073">
    <property type="entry name" value="ASPARTATE--AMMONIA LIGASE"/>
    <property type="match status" value="1"/>
</dbReference>
<dbReference type="PANTHER" id="PTHR30073:SF5">
    <property type="entry name" value="ASPARTATE--AMMONIA LIGASE"/>
    <property type="match status" value="1"/>
</dbReference>
<dbReference type="Pfam" id="PF03590">
    <property type="entry name" value="AsnA"/>
    <property type="match status" value="1"/>
</dbReference>
<dbReference type="PIRSF" id="PIRSF001555">
    <property type="entry name" value="Asp_ammon_ligase"/>
    <property type="match status" value="1"/>
</dbReference>
<dbReference type="SUPFAM" id="SSF55681">
    <property type="entry name" value="Class II aaRS and biotin synthetases"/>
    <property type="match status" value="1"/>
</dbReference>
<dbReference type="PROSITE" id="PS50862">
    <property type="entry name" value="AA_TRNA_LIGASE_II"/>
    <property type="match status" value="1"/>
</dbReference>
<keyword id="KW-0028">Amino-acid biosynthesis</keyword>
<keyword id="KW-0061">Asparagine biosynthesis</keyword>
<keyword id="KW-0067">ATP-binding</keyword>
<keyword id="KW-0963">Cytoplasm</keyword>
<keyword id="KW-0436">Ligase</keyword>
<keyword id="KW-0547">Nucleotide-binding</keyword>
<evidence type="ECO:0000255" key="1">
    <source>
        <dbReference type="HAMAP-Rule" id="MF_00555"/>
    </source>
</evidence>